<name>NXPH1_RAT</name>
<proteinExistence type="evidence at protein level"/>
<keyword id="KW-0002">3D-structure</keyword>
<keyword id="KW-0325">Glycoprotein</keyword>
<keyword id="KW-1185">Reference proteome</keyword>
<keyword id="KW-0964">Secreted</keyword>
<keyword id="KW-0732">Signal</keyword>
<feature type="signal peptide" evidence="2">
    <location>
        <begin position="1"/>
        <end position="21"/>
    </location>
</feature>
<feature type="chain" id="PRO_0000020061" description="Neurexophilin-1">
    <location>
        <begin position="22"/>
        <end position="271"/>
    </location>
</feature>
<feature type="region of interest" description="II">
    <location>
        <begin position="22"/>
        <end position="97"/>
    </location>
</feature>
<feature type="region of interest" description="III">
    <location>
        <begin position="98"/>
        <end position="176"/>
    </location>
</feature>
<feature type="region of interest" description="IV (linker domain)">
    <location>
        <begin position="177"/>
        <end position="185"/>
    </location>
</feature>
<feature type="region of interest" description="V (Cys-rich)">
    <location>
        <begin position="186"/>
        <end position="271"/>
    </location>
</feature>
<feature type="glycosylation site" description="N-linked (GlcNAc...) asparagine" evidence="2">
    <location>
        <position position="23"/>
    </location>
</feature>
<feature type="glycosylation site" description="N-linked (GlcNAc...) asparagine" evidence="2">
    <location>
        <position position="68"/>
    </location>
</feature>
<feature type="glycosylation site" description="N-linked (GlcNAc...) asparagine" evidence="2">
    <location>
        <position position="93"/>
    </location>
</feature>
<feature type="glycosylation site" description="N-linked (GlcNAc...) asparagine" evidence="2">
    <location>
        <position position="146"/>
    </location>
</feature>
<feature type="glycosylation site" description="N-linked (GlcNAc...) asparagine" evidence="2">
    <location>
        <position position="156"/>
    </location>
</feature>
<feature type="glycosylation site" description="N-linked (GlcNAc...) asparagine" evidence="2">
    <location>
        <position position="162"/>
    </location>
</feature>
<feature type="strand" evidence="4">
    <location>
        <begin position="122"/>
        <end position="129"/>
    </location>
</feature>
<feature type="strand" evidence="4">
    <location>
        <begin position="131"/>
        <end position="143"/>
    </location>
</feature>
<feature type="strand" evidence="4">
    <location>
        <begin position="145"/>
        <end position="168"/>
    </location>
</feature>
<feature type="strand" evidence="4">
    <location>
        <begin position="194"/>
        <end position="207"/>
    </location>
</feature>
<feature type="strand" evidence="4">
    <location>
        <begin position="219"/>
        <end position="232"/>
    </location>
</feature>
<feature type="strand" evidence="4">
    <location>
        <begin position="239"/>
        <end position="256"/>
    </location>
</feature>
<feature type="helix" evidence="4">
    <location>
        <begin position="259"/>
        <end position="261"/>
    </location>
</feature>
<protein>
    <recommendedName>
        <fullName>Neurexophilin-1</fullName>
        <shortName>Neurophilin</shortName>
    </recommendedName>
</protein>
<accession>Q63366</accession>
<accession>Q3KRD4</accession>
<gene>
    <name type="primary">Nxph1</name>
    <name type="synonym">Nph1</name>
</gene>
<dbReference type="EMBL" id="L27867">
    <property type="protein sequence ID" value="AAB18420.1"/>
    <property type="molecule type" value="mRNA"/>
</dbReference>
<dbReference type="EMBL" id="BC105770">
    <property type="protein sequence ID" value="AAI05771.1"/>
    <property type="molecule type" value="mRNA"/>
</dbReference>
<dbReference type="RefSeq" id="NP_037126.1">
    <property type="nucleotide sequence ID" value="NM_012994.2"/>
</dbReference>
<dbReference type="PDB" id="6PNP">
    <property type="method" value="X-ray"/>
    <property type="resolution" value="1.94 A"/>
    <property type="chains" value="B=119-271"/>
</dbReference>
<dbReference type="PDB" id="6PNQ">
    <property type="method" value="X-ray"/>
    <property type="resolution" value="1.95 A"/>
    <property type="chains" value="B=119-271"/>
</dbReference>
<dbReference type="PDBsum" id="6PNP"/>
<dbReference type="PDBsum" id="6PNQ"/>
<dbReference type="SMR" id="Q63366"/>
<dbReference type="FunCoup" id="Q63366">
    <property type="interactions" value="755"/>
</dbReference>
<dbReference type="STRING" id="10116.ENSRNOP00000011833"/>
<dbReference type="GlyCosmos" id="Q63366">
    <property type="glycosylation" value="6 sites, No reported glycans"/>
</dbReference>
<dbReference type="GlyGen" id="Q63366">
    <property type="glycosylation" value="6 sites"/>
</dbReference>
<dbReference type="iPTMnet" id="Q63366"/>
<dbReference type="PhosphoSitePlus" id="Q63366"/>
<dbReference type="PaxDb" id="10116-ENSRNOP00000011833"/>
<dbReference type="Ensembl" id="ENSRNOT00000011833.5">
    <property type="protein sequence ID" value="ENSRNOP00000011833.3"/>
    <property type="gene ID" value="ENSRNOG00000008939.5"/>
</dbReference>
<dbReference type="GeneID" id="25501"/>
<dbReference type="KEGG" id="rno:25501"/>
<dbReference type="UCSC" id="RGD:3218">
    <property type="organism name" value="rat"/>
</dbReference>
<dbReference type="AGR" id="RGD:3218"/>
<dbReference type="CTD" id="30010"/>
<dbReference type="RGD" id="3218">
    <property type="gene designation" value="Nxph1"/>
</dbReference>
<dbReference type="eggNOG" id="ENOG502QQUX">
    <property type="taxonomic scope" value="Eukaryota"/>
</dbReference>
<dbReference type="GeneTree" id="ENSGT00950000182883"/>
<dbReference type="InParanoid" id="Q63366"/>
<dbReference type="OMA" id="FCFQVTC"/>
<dbReference type="OrthoDB" id="8690369at2759"/>
<dbReference type="PhylomeDB" id="Q63366"/>
<dbReference type="PRO" id="PR:Q63366"/>
<dbReference type="Proteomes" id="UP000002494">
    <property type="component" value="Chromosome 4"/>
</dbReference>
<dbReference type="GO" id="GO:0098982">
    <property type="term" value="C:GABA-ergic synapse"/>
    <property type="evidence" value="ECO:0000266"/>
    <property type="project" value="RGD"/>
</dbReference>
<dbReference type="GO" id="GO:0098978">
    <property type="term" value="C:glutamatergic synapse"/>
    <property type="evidence" value="ECO:0000266"/>
    <property type="project" value="RGD"/>
</dbReference>
<dbReference type="GO" id="GO:0043083">
    <property type="term" value="C:synaptic cleft"/>
    <property type="evidence" value="ECO:0000266"/>
    <property type="project" value="RGD"/>
</dbReference>
<dbReference type="GO" id="GO:0005102">
    <property type="term" value="F:signaling receptor binding"/>
    <property type="evidence" value="ECO:0000266"/>
    <property type="project" value="RGD"/>
</dbReference>
<dbReference type="GO" id="GO:0050804">
    <property type="term" value="P:modulation of chemical synaptic transmission"/>
    <property type="evidence" value="ECO:0000266"/>
    <property type="project" value="RGD"/>
</dbReference>
<dbReference type="InterPro" id="IPR010450">
    <property type="entry name" value="Nxph"/>
</dbReference>
<dbReference type="InterPro" id="IPR026845">
    <property type="entry name" value="NXPH/NXPE"/>
</dbReference>
<dbReference type="PANTHER" id="PTHR17103">
    <property type="entry name" value="NEUREXOPHILIN"/>
    <property type="match status" value="1"/>
</dbReference>
<dbReference type="PANTHER" id="PTHR17103:SF13">
    <property type="entry name" value="NEUREXOPHILIN-1"/>
    <property type="match status" value="1"/>
</dbReference>
<dbReference type="Pfam" id="PF06312">
    <property type="entry name" value="Neurexophilin"/>
    <property type="match status" value="1"/>
</dbReference>
<dbReference type="PIRSF" id="PIRSF038019">
    <property type="entry name" value="Neurexophilin"/>
    <property type="match status" value="1"/>
</dbReference>
<comment type="function">
    <text evidence="1">May be signaling molecules that resemble neuropeptides. Ligand for alpha-neurexins (By similarity).</text>
</comment>
<comment type="subcellular location">
    <subcellularLocation>
        <location evidence="3">Secreted</location>
    </subcellularLocation>
</comment>
<comment type="tissue specificity">
    <text>Highest level in brain.</text>
</comment>
<comment type="PTM">
    <text>May be proteolytically processed at the boundary between the N-terminal non-conserved and the central conserved domain in neuron-like cells.</text>
</comment>
<comment type="similarity">
    <text evidence="3">Belongs to the neurexophilin family.</text>
</comment>
<organism>
    <name type="scientific">Rattus norvegicus</name>
    <name type="common">Rat</name>
    <dbReference type="NCBI Taxonomy" id="10116"/>
    <lineage>
        <taxon>Eukaryota</taxon>
        <taxon>Metazoa</taxon>
        <taxon>Chordata</taxon>
        <taxon>Craniata</taxon>
        <taxon>Vertebrata</taxon>
        <taxon>Euteleostomi</taxon>
        <taxon>Mammalia</taxon>
        <taxon>Eutheria</taxon>
        <taxon>Euarchontoglires</taxon>
        <taxon>Glires</taxon>
        <taxon>Rodentia</taxon>
        <taxon>Myomorpha</taxon>
        <taxon>Muroidea</taxon>
        <taxon>Muridae</taxon>
        <taxon>Murinae</taxon>
        <taxon>Rattus</taxon>
    </lineage>
</organism>
<sequence>MQAACWYVLLLLQPTVYLVTCANLTNGGKSELLKSGNSKSTLKHIWTESSKDLSISRLLSQTFRGKENGTDLDLRYDTPEPYSEQDLWDWLRNSTDLQEPRPRAKRRPIVKTGKFKKMFGWGDFHSNIKTVKLNLLITGKIVDHGNGTFSVYFRHNSTGQGNVSVSLVPPTKIVEFDLAQQTVIDAKDSKSFNCRIEYEKVDKATKNTLCNYDPSKTCYQEQTQSHVSWLCSKPFKVICIYISFYSTDYKLVQKVCPDYNYHSDTPYFPSG</sequence>
<evidence type="ECO:0000250" key="1"/>
<evidence type="ECO:0000255" key="2"/>
<evidence type="ECO:0000305" key="3"/>
<evidence type="ECO:0007829" key="4">
    <source>
        <dbReference type="PDB" id="6PNP"/>
    </source>
</evidence>
<reference key="1">
    <citation type="journal article" date="1996" name="J. Neurosci.">
        <title>Structure and evolution of neurexophilin.</title>
        <authorList>
            <person name="Petrenko A.G."/>
            <person name="Ullrich B."/>
            <person name="Missler M."/>
            <person name="Krasnoperov V."/>
            <person name="Rosahl T.W."/>
            <person name="Suedhof T.C."/>
        </authorList>
    </citation>
    <scope>NUCLEOTIDE SEQUENCE [MRNA]</scope>
    <source>
        <tissue>Brain</tissue>
    </source>
</reference>
<reference key="2">
    <citation type="journal article" date="2004" name="Genome Res.">
        <title>The status, quality, and expansion of the NIH full-length cDNA project: the Mammalian Gene Collection (MGC).</title>
        <authorList>
            <consortium name="The MGC Project Team"/>
        </authorList>
    </citation>
    <scope>NUCLEOTIDE SEQUENCE [LARGE SCALE MRNA]</scope>
    <source>
        <tissue>Prostate</tissue>
    </source>
</reference>